<sequence length="551" mass="60929">MSRHFDRGSFRAVSDVHQLMSFPDFSASDAHVQWQRFNNLLWHHNDLGIWLDISRMHINAEDFERLGPRFDQAFKAMQALEQGAIANTDEQRMVGHYWLRQPQLAPDQEVCDHIAKEIDLIETFGSNVINGLIKAPNGKKFTDVLWIGIGGSGLGPLLMIRALQNAEQGLRFHFFDNVDPDGMSRVLGNLGDALSTTLVVTVSKSGATPEPHLGMEQARQRLEAMGGHWAGQAVAVTMLNSQLDQLAQKESWLKRFDMFDWVGGRTSITSAVGLLPAALIGCDIRAFLAGAAQMDEATRVSDLHSNPASLMAAAWFVAGDGLGRRDMVVLPYRDRLEVFSRYLQQLVMESLGKRLDRDGNVVHQGLAVYGNKGSTDQHAYVQQLRDGVDNFFATFIEVLEDVENIPAINNEHPGDFLDGFLQGTRAALSQGGRQSLTISMRRFDPRRLGALVALFERAVGLYGELVNINAYHQPGVESGKKAAAAILNLQSRVEDLLADGVERSAGEIHQVIGDGSEEAIFWIMRHLTANKRGYVAEGDWGIPTSLRFSKG</sequence>
<name>G6PI_PROMM</name>
<proteinExistence type="inferred from homology"/>
<organism>
    <name type="scientific">Prochlorococcus marinus (strain MIT 9313)</name>
    <dbReference type="NCBI Taxonomy" id="74547"/>
    <lineage>
        <taxon>Bacteria</taxon>
        <taxon>Bacillati</taxon>
        <taxon>Cyanobacteriota</taxon>
        <taxon>Cyanophyceae</taxon>
        <taxon>Synechococcales</taxon>
        <taxon>Prochlorococcaceae</taxon>
        <taxon>Prochlorococcus</taxon>
    </lineage>
</organism>
<gene>
    <name evidence="1" type="primary">pgi</name>
    <name type="ordered locus">PMT_0714</name>
</gene>
<feature type="chain" id="PRO_0000180705" description="Glucose-6-phosphate isomerase">
    <location>
        <begin position="1"/>
        <end position="551"/>
    </location>
</feature>
<feature type="active site" description="Proton donor" evidence="1">
    <location>
        <position position="349"/>
    </location>
</feature>
<feature type="active site" evidence="1">
    <location>
        <position position="378"/>
    </location>
</feature>
<feature type="active site" evidence="1">
    <location>
        <position position="480"/>
    </location>
</feature>
<accession>Q7V7M6</accession>
<keyword id="KW-0963">Cytoplasm</keyword>
<keyword id="KW-0312">Gluconeogenesis</keyword>
<keyword id="KW-0324">Glycolysis</keyword>
<keyword id="KW-0413">Isomerase</keyword>
<keyword id="KW-1185">Reference proteome</keyword>
<comment type="function">
    <text evidence="1">Catalyzes the reversible isomerization of glucose-6-phosphate to fructose-6-phosphate.</text>
</comment>
<comment type="catalytic activity">
    <reaction evidence="1">
        <text>alpha-D-glucose 6-phosphate = beta-D-fructose 6-phosphate</text>
        <dbReference type="Rhea" id="RHEA:11816"/>
        <dbReference type="ChEBI" id="CHEBI:57634"/>
        <dbReference type="ChEBI" id="CHEBI:58225"/>
        <dbReference type="EC" id="5.3.1.9"/>
    </reaction>
</comment>
<comment type="pathway">
    <text evidence="1">Carbohydrate biosynthesis; gluconeogenesis.</text>
</comment>
<comment type="pathway">
    <text evidence="1">Carbohydrate degradation; glycolysis; D-glyceraldehyde 3-phosphate and glycerone phosphate from D-glucose: step 2/4.</text>
</comment>
<comment type="subcellular location">
    <subcellularLocation>
        <location evidence="1">Cytoplasm</location>
    </subcellularLocation>
</comment>
<comment type="similarity">
    <text evidence="1">Belongs to the GPI family.</text>
</comment>
<comment type="sequence caution" evidence="2">
    <conflict type="erroneous initiation">
        <sequence resource="EMBL-CDS" id="CAE20889"/>
    </conflict>
</comment>
<dbReference type="EC" id="5.3.1.9" evidence="1"/>
<dbReference type="EMBL" id="BX548175">
    <property type="protein sequence ID" value="CAE20889.1"/>
    <property type="status" value="ALT_INIT"/>
    <property type="molecule type" value="Genomic_DNA"/>
</dbReference>
<dbReference type="SMR" id="Q7V7M6"/>
<dbReference type="KEGG" id="pmt:PMT_0714"/>
<dbReference type="eggNOG" id="COG0166">
    <property type="taxonomic scope" value="Bacteria"/>
</dbReference>
<dbReference type="HOGENOM" id="CLU_033288_0_0_3"/>
<dbReference type="UniPathway" id="UPA00109">
    <property type="reaction ID" value="UER00181"/>
</dbReference>
<dbReference type="UniPathway" id="UPA00138"/>
<dbReference type="Proteomes" id="UP000001423">
    <property type="component" value="Chromosome"/>
</dbReference>
<dbReference type="GO" id="GO:0005829">
    <property type="term" value="C:cytosol"/>
    <property type="evidence" value="ECO:0007669"/>
    <property type="project" value="TreeGrafter"/>
</dbReference>
<dbReference type="GO" id="GO:0097367">
    <property type="term" value="F:carbohydrate derivative binding"/>
    <property type="evidence" value="ECO:0007669"/>
    <property type="project" value="InterPro"/>
</dbReference>
<dbReference type="GO" id="GO:0004347">
    <property type="term" value="F:glucose-6-phosphate isomerase activity"/>
    <property type="evidence" value="ECO:0007669"/>
    <property type="project" value="UniProtKB-UniRule"/>
</dbReference>
<dbReference type="GO" id="GO:0048029">
    <property type="term" value="F:monosaccharide binding"/>
    <property type="evidence" value="ECO:0007669"/>
    <property type="project" value="TreeGrafter"/>
</dbReference>
<dbReference type="GO" id="GO:0006094">
    <property type="term" value="P:gluconeogenesis"/>
    <property type="evidence" value="ECO:0007669"/>
    <property type="project" value="UniProtKB-UniRule"/>
</dbReference>
<dbReference type="GO" id="GO:0051156">
    <property type="term" value="P:glucose 6-phosphate metabolic process"/>
    <property type="evidence" value="ECO:0007669"/>
    <property type="project" value="TreeGrafter"/>
</dbReference>
<dbReference type="GO" id="GO:0006096">
    <property type="term" value="P:glycolytic process"/>
    <property type="evidence" value="ECO:0007669"/>
    <property type="project" value="UniProtKB-UniRule"/>
</dbReference>
<dbReference type="CDD" id="cd05015">
    <property type="entry name" value="SIS_PGI_1"/>
    <property type="match status" value="1"/>
</dbReference>
<dbReference type="CDD" id="cd05016">
    <property type="entry name" value="SIS_PGI_2"/>
    <property type="match status" value="1"/>
</dbReference>
<dbReference type="FunFam" id="3.40.50.10490:FF:000021">
    <property type="entry name" value="Glucose-6-phosphate isomerase"/>
    <property type="match status" value="1"/>
</dbReference>
<dbReference type="Gene3D" id="3.40.50.10490">
    <property type="entry name" value="Glucose-6-phosphate isomerase like protein, domain 1"/>
    <property type="match status" value="2"/>
</dbReference>
<dbReference type="HAMAP" id="MF_00473">
    <property type="entry name" value="G6P_isomerase"/>
    <property type="match status" value="1"/>
</dbReference>
<dbReference type="InterPro" id="IPR001672">
    <property type="entry name" value="G6P_Isomerase"/>
</dbReference>
<dbReference type="InterPro" id="IPR018189">
    <property type="entry name" value="Phosphoglucose_isomerase_CS"/>
</dbReference>
<dbReference type="InterPro" id="IPR046348">
    <property type="entry name" value="SIS_dom_sf"/>
</dbReference>
<dbReference type="InterPro" id="IPR035476">
    <property type="entry name" value="SIS_PGI_1"/>
</dbReference>
<dbReference type="InterPro" id="IPR035482">
    <property type="entry name" value="SIS_PGI_2"/>
</dbReference>
<dbReference type="NCBIfam" id="NF010696">
    <property type="entry name" value="PRK14096.1"/>
    <property type="match status" value="1"/>
</dbReference>
<dbReference type="PANTHER" id="PTHR11469">
    <property type="entry name" value="GLUCOSE-6-PHOSPHATE ISOMERASE"/>
    <property type="match status" value="1"/>
</dbReference>
<dbReference type="PANTHER" id="PTHR11469:SF1">
    <property type="entry name" value="GLUCOSE-6-PHOSPHATE ISOMERASE"/>
    <property type="match status" value="1"/>
</dbReference>
<dbReference type="Pfam" id="PF00342">
    <property type="entry name" value="PGI"/>
    <property type="match status" value="2"/>
</dbReference>
<dbReference type="PRINTS" id="PR00662">
    <property type="entry name" value="G6PISOMERASE"/>
</dbReference>
<dbReference type="SUPFAM" id="SSF53697">
    <property type="entry name" value="SIS domain"/>
    <property type="match status" value="1"/>
</dbReference>
<dbReference type="PROSITE" id="PS00174">
    <property type="entry name" value="P_GLUCOSE_ISOMERASE_2"/>
    <property type="match status" value="1"/>
</dbReference>
<dbReference type="PROSITE" id="PS51463">
    <property type="entry name" value="P_GLUCOSE_ISOMERASE_3"/>
    <property type="match status" value="1"/>
</dbReference>
<reference key="1">
    <citation type="journal article" date="2003" name="Nature">
        <title>Genome divergence in two Prochlorococcus ecotypes reflects oceanic niche differentiation.</title>
        <authorList>
            <person name="Rocap G."/>
            <person name="Larimer F.W."/>
            <person name="Lamerdin J.E."/>
            <person name="Malfatti S."/>
            <person name="Chain P."/>
            <person name="Ahlgren N.A."/>
            <person name="Arellano A."/>
            <person name="Coleman M."/>
            <person name="Hauser L."/>
            <person name="Hess W.R."/>
            <person name="Johnson Z.I."/>
            <person name="Land M.L."/>
            <person name="Lindell D."/>
            <person name="Post A.F."/>
            <person name="Regala W."/>
            <person name="Shah M."/>
            <person name="Shaw S.L."/>
            <person name="Steglich C."/>
            <person name="Sullivan M.B."/>
            <person name="Ting C.S."/>
            <person name="Tolonen A."/>
            <person name="Webb E.A."/>
            <person name="Zinser E.R."/>
            <person name="Chisholm S.W."/>
        </authorList>
    </citation>
    <scope>NUCLEOTIDE SEQUENCE [LARGE SCALE GENOMIC DNA]</scope>
    <source>
        <strain>MIT 9313</strain>
    </source>
</reference>
<protein>
    <recommendedName>
        <fullName evidence="1">Glucose-6-phosphate isomerase</fullName>
        <shortName evidence="1">GPI</shortName>
        <ecNumber evidence="1">5.3.1.9</ecNumber>
    </recommendedName>
    <alternativeName>
        <fullName evidence="1">Phosphoglucose isomerase</fullName>
        <shortName evidence="1">PGI</shortName>
    </alternativeName>
    <alternativeName>
        <fullName evidence="1">Phosphohexose isomerase</fullName>
        <shortName evidence="1">PHI</shortName>
    </alternativeName>
</protein>
<evidence type="ECO:0000255" key="1">
    <source>
        <dbReference type="HAMAP-Rule" id="MF_00473"/>
    </source>
</evidence>
<evidence type="ECO:0000305" key="2"/>